<gene>
    <name evidence="1" type="primary">pylS</name>
    <name type="ordered locus">MM_1445</name>
</gene>
<sequence length="454" mass="50921">MDKKPLNTLISATGLWMSRTGTIHKIKHHEVSRSKIYIEMACGDHLVVNNSRSSRTARALRHHKYRKTCKRCRVSDEDLNKFLTKANEDQTSVKVKVVSAPTRTKKAMPKSVARAPKPLENTEAAQAQPSGSKFSPAIPVSTQESVSVPASVSTSISSISTGATASALVKGNTNPITSMSAPVQASAPALTKSQTDRLEVLLNPKDEISLNSGKPFRELESELLSRRKKDLQQIYAEERENYLGKLEREITRFFVDRGFLEIKSPILIPLEYIERMGIDNDTELSKQIFRVDKNFCLRPMLAPNLYNYLRKLDRALPDPIKIFEIGPCYRKESDGKEHLEEFTMLNFCQMGSGCTRENLESIITDFLNHLGIDFKIVGDSCMVYGDTLDVMHGDLELSSAVVGPIPLDREWGIDKPWIGAGFGLERLLKVKHDFKNIKRAARSESYYNGISTNL</sequence>
<proteinExistence type="evidence at protein level"/>
<reference key="1">
    <citation type="journal article" date="2002" name="J. Mol. Microbiol. Biotechnol.">
        <title>The genome of Methanosarcina mazei: evidence for lateral gene transfer between Bacteria and Archaea.</title>
        <authorList>
            <person name="Deppenmeier U."/>
            <person name="Johann A."/>
            <person name="Hartsch T."/>
            <person name="Merkl R."/>
            <person name="Schmitz R.A."/>
            <person name="Martinez-Arias R."/>
            <person name="Henne A."/>
            <person name="Wiezer A."/>
            <person name="Baeumer S."/>
            <person name="Jacobi C."/>
            <person name="Brueggemann H."/>
            <person name="Lienard T."/>
            <person name="Christmann A."/>
            <person name="Boemecke M."/>
            <person name="Steckel S."/>
            <person name="Bhattacharyya A."/>
            <person name="Lykidis A."/>
            <person name="Overbeek R."/>
            <person name="Klenk H.-P."/>
            <person name="Gunsalus R.P."/>
            <person name="Fritz H.-J."/>
            <person name="Gottschalk G."/>
        </authorList>
    </citation>
    <scope>NUCLEOTIDE SEQUENCE [LARGE SCALE GENOMIC DNA]</scope>
    <source>
        <strain>ATCC BAA-159 / DSM 3647 / Goe1 / Go1 / JCM 11833 / OCM 88</strain>
    </source>
</reference>
<name>PYLS_METMA</name>
<comment type="function">
    <text evidence="1">Catalyzes the attachment of pyrrolysine to tRNA(Pyl). Pyrrolysine is a lysine derivative encoded by the termination codon UAG.</text>
</comment>
<comment type="catalytic activity">
    <reaction evidence="1">
        <text>tRNA(Pyl) + L-pyrrolysine + ATP = L-pyrrolysyl-tRNA(Pyl) + AMP + diphosphate</text>
        <dbReference type="Rhea" id="RHEA:19277"/>
        <dbReference type="Rhea" id="RHEA-COMP:9720"/>
        <dbReference type="Rhea" id="RHEA-COMP:9721"/>
        <dbReference type="ChEBI" id="CHEBI:30616"/>
        <dbReference type="ChEBI" id="CHEBI:33019"/>
        <dbReference type="ChEBI" id="CHEBI:58499"/>
        <dbReference type="ChEBI" id="CHEBI:78442"/>
        <dbReference type="ChEBI" id="CHEBI:78556"/>
        <dbReference type="ChEBI" id="CHEBI:456215"/>
        <dbReference type="EC" id="6.1.1.26"/>
    </reaction>
</comment>
<comment type="subcellular location">
    <subcellularLocation>
        <location evidence="1">Cytoplasm</location>
    </subcellularLocation>
</comment>
<comment type="similarity">
    <text evidence="1">Belongs to the class-II aminoacyl-tRNA synthetase family.</text>
</comment>
<accession>Q8PWY1</accession>
<organism>
    <name type="scientific">Methanosarcina mazei (strain ATCC BAA-159 / DSM 3647 / Goe1 / Go1 / JCM 11833 / OCM 88)</name>
    <name type="common">Methanosarcina frisia</name>
    <dbReference type="NCBI Taxonomy" id="192952"/>
    <lineage>
        <taxon>Archaea</taxon>
        <taxon>Methanobacteriati</taxon>
        <taxon>Methanobacteriota</taxon>
        <taxon>Stenosarchaea group</taxon>
        <taxon>Methanomicrobia</taxon>
        <taxon>Methanosarcinales</taxon>
        <taxon>Methanosarcinaceae</taxon>
        <taxon>Methanosarcina</taxon>
    </lineage>
</organism>
<evidence type="ECO:0000255" key="1">
    <source>
        <dbReference type="HAMAP-Rule" id="MF_01573"/>
    </source>
</evidence>
<evidence type="ECO:0000256" key="2">
    <source>
        <dbReference type="SAM" id="MobiDB-lite"/>
    </source>
</evidence>
<evidence type="ECO:0007829" key="3">
    <source>
        <dbReference type="PDB" id="4CH3"/>
    </source>
</evidence>
<evidence type="ECO:0007829" key="4">
    <source>
        <dbReference type="PDB" id="4CS4"/>
    </source>
</evidence>
<evidence type="ECO:0007829" key="5">
    <source>
        <dbReference type="PDB" id="4TQD"/>
    </source>
</evidence>
<evidence type="ECO:0007829" key="6">
    <source>
        <dbReference type="PDB" id="5K1X"/>
    </source>
</evidence>
<evidence type="ECO:0007829" key="7">
    <source>
        <dbReference type="PDB" id="5UD5"/>
    </source>
</evidence>
<evidence type="ECO:0007829" key="8">
    <source>
        <dbReference type="PDB" id="6AB2"/>
    </source>
</evidence>
<evidence type="ECO:0007829" key="9">
    <source>
        <dbReference type="PDB" id="6ABL"/>
    </source>
</evidence>
<evidence type="ECO:0007829" key="10">
    <source>
        <dbReference type="PDB" id="6LYA"/>
    </source>
</evidence>
<keyword id="KW-0002">3D-structure</keyword>
<keyword id="KW-0030">Aminoacyl-tRNA synthetase</keyword>
<keyword id="KW-0067">ATP-binding</keyword>
<keyword id="KW-0963">Cytoplasm</keyword>
<keyword id="KW-0436">Ligase</keyword>
<keyword id="KW-0547">Nucleotide-binding</keyword>
<keyword id="KW-0648">Protein biosynthesis</keyword>
<feature type="chain" id="PRO_0000260453" description="Pyrrolysine--tRNA ligase">
    <location>
        <begin position="1"/>
        <end position="454"/>
    </location>
</feature>
<feature type="region of interest" description="Disordered" evidence="2">
    <location>
        <begin position="102"/>
        <end position="138"/>
    </location>
</feature>
<feature type="compositionally biased region" description="Polar residues" evidence="2">
    <location>
        <begin position="123"/>
        <end position="133"/>
    </location>
</feature>
<feature type="helix" evidence="7">
    <location>
        <begin position="6"/>
        <end position="13"/>
    </location>
</feature>
<feature type="strand" evidence="7">
    <location>
        <begin position="15"/>
        <end position="17"/>
    </location>
</feature>
<feature type="strand" evidence="7">
    <location>
        <begin position="21"/>
        <end position="32"/>
    </location>
</feature>
<feature type="strand" evidence="7">
    <location>
        <begin position="35"/>
        <end position="40"/>
    </location>
</feature>
<feature type="strand" evidence="7">
    <location>
        <begin position="45"/>
        <end position="49"/>
    </location>
</feature>
<feature type="strand" evidence="7">
    <location>
        <begin position="52"/>
        <end position="54"/>
    </location>
</feature>
<feature type="helix" evidence="7">
    <location>
        <begin position="55"/>
        <end position="61"/>
    </location>
</feature>
<feature type="strand" evidence="7">
    <location>
        <begin position="66"/>
        <end position="68"/>
    </location>
</feature>
<feature type="turn" evidence="7">
    <location>
        <begin position="70"/>
        <end position="73"/>
    </location>
</feature>
<feature type="helix" evidence="7">
    <location>
        <begin position="76"/>
        <end position="83"/>
    </location>
</feature>
<feature type="helix" evidence="4">
    <location>
        <begin position="192"/>
        <end position="201"/>
    </location>
</feature>
<feature type="helix" evidence="3">
    <location>
        <begin position="204"/>
        <end position="206"/>
    </location>
</feature>
<feature type="helix" evidence="10">
    <location>
        <begin position="210"/>
        <end position="212"/>
    </location>
</feature>
<feature type="helix" evidence="4">
    <location>
        <begin position="216"/>
        <end position="236"/>
    </location>
</feature>
<feature type="helix" evidence="4">
    <location>
        <begin position="242"/>
        <end position="256"/>
    </location>
</feature>
<feature type="strand" evidence="4">
    <location>
        <begin position="260"/>
        <end position="262"/>
    </location>
</feature>
<feature type="strand" evidence="4">
    <location>
        <begin position="266"/>
        <end position="269"/>
    </location>
</feature>
<feature type="helix" evidence="4">
    <location>
        <begin position="270"/>
        <end position="275"/>
    </location>
</feature>
<feature type="strand" evidence="9">
    <location>
        <begin position="280"/>
        <end position="282"/>
    </location>
</feature>
<feature type="helix" evidence="4">
    <location>
        <begin position="283"/>
        <end position="287"/>
    </location>
</feature>
<feature type="strand" evidence="6">
    <location>
        <begin position="289"/>
        <end position="291"/>
    </location>
</feature>
<feature type="turn" evidence="4">
    <location>
        <begin position="292"/>
        <end position="294"/>
    </location>
</feature>
<feature type="strand" evidence="4">
    <location>
        <begin position="295"/>
        <end position="297"/>
    </location>
</feature>
<feature type="strand" evidence="5">
    <location>
        <begin position="299"/>
        <end position="301"/>
    </location>
</feature>
<feature type="helix" evidence="4">
    <location>
        <begin position="302"/>
        <end position="312"/>
    </location>
</feature>
<feature type="turn" evidence="4">
    <location>
        <begin position="313"/>
        <end position="315"/>
    </location>
</feature>
<feature type="strand" evidence="4">
    <location>
        <begin position="318"/>
        <end position="329"/>
    </location>
</feature>
<feature type="strand" evidence="8">
    <location>
        <begin position="335"/>
        <end position="337"/>
    </location>
</feature>
<feature type="strand" evidence="4">
    <location>
        <begin position="340"/>
        <end position="351"/>
    </location>
</feature>
<feature type="helix" evidence="4">
    <location>
        <begin position="356"/>
        <end position="370"/>
    </location>
</feature>
<feature type="strand" evidence="4">
    <location>
        <begin position="375"/>
        <end position="381"/>
    </location>
</feature>
<feature type="turn" evidence="4">
    <location>
        <begin position="382"/>
        <end position="384"/>
    </location>
</feature>
<feature type="strand" evidence="4">
    <location>
        <begin position="385"/>
        <end position="392"/>
    </location>
</feature>
<feature type="strand" evidence="4">
    <location>
        <begin position="395"/>
        <end position="403"/>
    </location>
</feature>
<feature type="helix" evidence="4">
    <location>
        <begin position="406"/>
        <end position="411"/>
    </location>
</feature>
<feature type="strand" evidence="4">
    <location>
        <begin position="417"/>
        <end position="423"/>
    </location>
</feature>
<feature type="helix" evidence="4">
    <location>
        <begin position="424"/>
        <end position="432"/>
    </location>
</feature>
<feature type="helix" evidence="4">
    <location>
        <begin position="437"/>
        <end position="440"/>
    </location>
</feature>
<feature type="strand" evidence="4">
    <location>
        <begin position="444"/>
        <end position="447"/>
    </location>
</feature>
<feature type="strand" evidence="4">
    <location>
        <begin position="450"/>
        <end position="452"/>
    </location>
</feature>
<dbReference type="EC" id="6.1.1.26" evidence="1"/>
<dbReference type="EMBL" id="AE008384">
    <property type="protein sequence ID" value="AAM31141.1"/>
    <property type="molecule type" value="Genomic_DNA"/>
</dbReference>
<dbReference type="RefSeq" id="WP_011033391.1">
    <property type="nucleotide sequence ID" value="NC_003901.1"/>
</dbReference>
<dbReference type="PDB" id="2E3C">
    <property type="method" value="X-ray"/>
    <property type="resolution" value="2.65 A"/>
    <property type="chains" value="A=185-454"/>
</dbReference>
<dbReference type="PDB" id="2Q7E">
    <property type="method" value="X-ray"/>
    <property type="resolution" value="1.80 A"/>
    <property type="chains" value="A=185-454"/>
</dbReference>
<dbReference type="PDB" id="2Q7G">
    <property type="method" value="X-ray"/>
    <property type="resolution" value="1.90 A"/>
    <property type="chains" value="A=185-454"/>
</dbReference>
<dbReference type="PDB" id="2Q7H">
    <property type="method" value="X-ray"/>
    <property type="resolution" value="2.10 A"/>
    <property type="chains" value="A=185-454"/>
</dbReference>
<dbReference type="PDB" id="2ZCE">
    <property type="method" value="X-ray"/>
    <property type="resolution" value="1.80 A"/>
    <property type="chains" value="A=185-454"/>
</dbReference>
<dbReference type="PDB" id="2ZIM">
    <property type="method" value="X-ray"/>
    <property type="resolution" value="2.10 A"/>
    <property type="chains" value="A=185-454"/>
</dbReference>
<dbReference type="PDB" id="2ZIN">
    <property type="method" value="X-ray"/>
    <property type="resolution" value="1.79 A"/>
    <property type="chains" value="A=185-454"/>
</dbReference>
<dbReference type="PDB" id="2ZIO">
    <property type="method" value="X-ray"/>
    <property type="resolution" value="2.06 A"/>
    <property type="chains" value="A=185-454"/>
</dbReference>
<dbReference type="PDB" id="3QTC">
    <property type="method" value="X-ray"/>
    <property type="resolution" value="1.75 A"/>
    <property type="chains" value="A=185-454"/>
</dbReference>
<dbReference type="PDB" id="3VQV">
    <property type="method" value="X-ray"/>
    <property type="resolution" value="1.90 A"/>
    <property type="chains" value="A=185-454"/>
</dbReference>
<dbReference type="PDB" id="3VQW">
    <property type="method" value="X-ray"/>
    <property type="resolution" value="2.40 A"/>
    <property type="chains" value="A=185-454"/>
</dbReference>
<dbReference type="PDB" id="3VQX">
    <property type="method" value="X-ray"/>
    <property type="resolution" value="2.30 A"/>
    <property type="chains" value="A/B/C/D=185-454"/>
</dbReference>
<dbReference type="PDB" id="4BW9">
    <property type="method" value="X-ray"/>
    <property type="resolution" value="2.35 A"/>
    <property type="chains" value="A=185-454"/>
</dbReference>
<dbReference type="PDB" id="4BWA">
    <property type="method" value="X-ray"/>
    <property type="resolution" value="2.45 A"/>
    <property type="chains" value="A=185-454"/>
</dbReference>
<dbReference type="PDB" id="4CH3">
    <property type="method" value="X-ray"/>
    <property type="resolution" value="2.28 A"/>
    <property type="chains" value="A=185-454"/>
</dbReference>
<dbReference type="PDB" id="4CH4">
    <property type="method" value="X-ray"/>
    <property type="resolution" value="2.16 A"/>
    <property type="chains" value="A=185-454"/>
</dbReference>
<dbReference type="PDB" id="4CH5">
    <property type="method" value="X-ray"/>
    <property type="resolution" value="2.20 A"/>
    <property type="chains" value="A=185-454"/>
</dbReference>
<dbReference type="PDB" id="4CH6">
    <property type="method" value="X-ray"/>
    <property type="resolution" value="2.05 A"/>
    <property type="chains" value="A=185-454"/>
</dbReference>
<dbReference type="PDB" id="4CS2">
    <property type="method" value="X-ray"/>
    <property type="resolution" value="1.90 A"/>
    <property type="chains" value="A=188-454"/>
</dbReference>
<dbReference type="PDB" id="4CS3">
    <property type="method" value="X-ray"/>
    <property type="resolution" value="1.50 A"/>
    <property type="chains" value="A=188-454"/>
</dbReference>
<dbReference type="PDB" id="4CS4">
    <property type="method" value="X-ray"/>
    <property type="resolution" value="1.35 A"/>
    <property type="chains" value="A=188-454"/>
</dbReference>
<dbReference type="PDB" id="4Q6G">
    <property type="method" value="X-ray"/>
    <property type="resolution" value="2.25 A"/>
    <property type="chains" value="A=188-454"/>
</dbReference>
<dbReference type="PDB" id="4TQD">
    <property type="method" value="X-ray"/>
    <property type="resolution" value="2.14 A"/>
    <property type="chains" value="A=185-454"/>
</dbReference>
<dbReference type="PDB" id="4TQF">
    <property type="method" value="X-ray"/>
    <property type="resolution" value="2.71 A"/>
    <property type="chains" value="A=185-454"/>
</dbReference>
<dbReference type="PDB" id="4ZIB">
    <property type="method" value="X-ray"/>
    <property type="resolution" value="2.05 A"/>
    <property type="chains" value="A=185-454"/>
</dbReference>
<dbReference type="PDB" id="5K1P">
    <property type="method" value="X-ray"/>
    <property type="resolution" value="1.50 A"/>
    <property type="chains" value="A=188-454"/>
</dbReference>
<dbReference type="PDB" id="5K1X">
    <property type="method" value="X-ray"/>
    <property type="resolution" value="1.95 A"/>
    <property type="chains" value="A=188-454"/>
</dbReference>
<dbReference type="PDB" id="5UD5">
    <property type="method" value="X-ray"/>
    <property type="resolution" value="2.35 A"/>
    <property type="chains" value="A/B=1-101"/>
</dbReference>
<dbReference type="PDB" id="5V6X">
    <property type="method" value="X-ray"/>
    <property type="resolution" value="2.76 A"/>
    <property type="chains" value="A/B=1-101"/>
</dbReference>
<dbReference type="PDB" id="6AAC">
    <property type="method" value="X-ray"/>
    <property type="resolution" value="1.48 A"/>
    <property type="chains" value="A=185-454"/>
</dbReference>
<dbReference type="PDB" id="6AAD">
    <property type="method" value="X-ray"/>
    <property type="resolution" value="1.44 A"/>
    <property type="chains" value="A=185-454"/>
</dbReference>
<dbReference type="PDB" id="6AAN">
    <property type="method" value="X-ray"/>
    <property type="resolution" value="1.51 A"/>
    <property type="chains" value="A=185-454"/>
</dbReference>
<dbReference type="PDB" id="6AAO">
    <property type="method" value="X-ray"/>
    <property type="resolution" value="1.40 A"/>
    <property type="chains" value="A=185-454"/>
</dbReference>
<dbReference type="PDB" id="6AAP">
    <property type="method" value="X-ray"/>
    <property type="resolution" value="1.50 A"/>
    <property type="chains" value="A=185-454"/>
</dbReference>
<dbReference type="PDB" id="6AAQ">
    <property type="method" value="X-ray"/>
    <property type="resolution" value="1.55 A"/>
    <property type="chains" value="A=185-454"/>
</dbReference>
<dbReference type="PDB" id="6AAZ">
    <property type="method" value="X-ray"/>
    <property type="resolution" value="1.84 A"/>
    <property type="chains" value="A=185-454"/>
</dbReference>
<dbReference type="PDB" id="6AB0">
    <property type="method" value="X-ray"/>
    <property type="resolution" value="1.44 A"/>
    <property type="chains" value="A=185-454"/>
</dbReference>
<dbReference type="PDB" id="6AB1">
    <property type="method" value="X-ray"/>
    <property type="resolution" value="1.38 A"/>
    <property type="chains" value="A=185-454"/>
</dbReference>
<dbReference type="PDB" id="6AB2">
    <property type="method" value="X-ray"/>
    <property type="resolution" value="1.40 A"/>
    <property type="chains" value="A=185-454"/>
</dbReference>
<dbReference type="PDB" id="6AB8">
    <property type="method" value="X-ray"/>
    <property type="resolution" value="1.75 A"/>
    <property type="chains" value="A=185-454"/>
</dbReference>
<dbReference type="PDB" id="6ABK">
    <property type="method" value="X-ray"/>
    <property type="resolution" value="1.58 A"/>
    <property type="chains" value="A=185-454"/>
</dbReference>
<dbReference type="PDB" id="6ABL">
    <property type="method" value="X-ray"/>
    <property type="resolution" value="1.47 A"/>
    <property type="chains" value="A=185-454"/>
</dbReference>
<dbReference type="PDB" id="6ABM">
    <property type="method" value="X-ray"/>
    <property type="resolution" value="1.37 A"/>
    <property type="chains" value="A=185-454"/>
</dbReference>
<dbReference type="PDB" id="6LY3">
    <property type="method" value="X-ray"/>
    <property type="resolution" value="1.90 A"/>
    <property type="chains" value="A=185-454"/>
</dbReference>
<dbReference type="PDB" id="6LY6">
    <property type="method" value="X-ray"/>
    <property type="resolution" value="2.50 A"/>
    <property type="chains" value="A=185-454"/>
</dbReference>
<dbReference type="PDB" id="6LY7">
    <property type="method" value="X-ray"/>
    <property type="resolution" value="2.09 A"/>
    <property type="chains" value="A=185-454"/>
</dbReference>
<dbReference type="PDB" id="6LYA">
    <property type="method" value="X-ray"/>
    <property type="resolution" value="1.59 A"/>
    <property type="chains" value="A=185-454"/>
</dbReference>
<dbReference type="PDB" id="6LYB">
    <property type="method" value="X-ray"/>
    <property type="resolution" value="1.90 A"/>
    <property type="chains" value="A=185-454"/>
</dbReference>
<dbReference type="PDB" id="7RSM">
    <property type="method" value="X-ray"/>
    <property type="resolution" value="2.15 A"/>
    <property type="chains" value="A/B/C/D=188-454"/>
</dbReference>
<dbReference type="PDB" id="8KE1">
    <property type="method" value="X-ray"/>
    <property type="resolution" value="2.50 A"/>
    <property type="chains" value="A=185-454"/>
</dbReference>
<dbReference type="PDB" id="8KE2">
    <property type="method" value="X-ray"/>
    <property type="resolution" value="2.20 A"/>
    <property type="chains" value="A=185-454"/>
</dbReference>
<dbReference type="PDB" id="8KE3">
    <property type="method" value="X-ray"/>
    <property type="resolution" value="1.90 A"/>
    <property type="chains" value="A=185-454"/>
</dbReference>
<dbReference type="PDB" id="8KE4">
    <property type="method" value="X-ray"/>
    <property type="resolution" value="1.75 A"/>
    <property type="chains" value="A=185-454"/>
</dbReference>
<dbReference type="PDB" id="8KE5">
    <property type="method" value="X-ray"/>
    <property type="resolution" value="1.90 A"/>
    <property type="chains" value="A=185-454"/>
</dbReference>
<dbReference type="PDB" id="8KE6">
    <property type="method" value="X-ray"/>
    <property type="resolution" value="1.90 A"/>
    <property type="chains" value="A=185-454"/>
</dbReference>
<dbReference type="PDB" id="8RIS">
    <property type="method" value="X-ray"/>
    <property type="resolution" value="2.70 A"/>
    <property type="chains" value="A=188-454"/>
</dbReference>
<dbReference type="PDBsum" id="2E3C"/>
<dbReference type="PDBsum" id="2Q7E"/>
<dbReference type="PDBsum" id="2Q7G"/>
<dbReference type="PDBsum" id="2Q7H"/>
<dbReference type="PDBsum" id="2ZCE"/>
<dbReference type="PDBsum" id="2ZIM"/>
<dbReference type="PDBsum" id="2ZIN"/>
<dbReference type="PDBsum" id="2ZIO"/>
<dbReference type="PDBsum" id="3QTC"/>
<dbReference type="PDBsum" id="3VQV"/>
<dbReference type="PDBsum" id="3VQW"/>
<dbReference type="PDBsum" id="3VQX"/>
<dbReference type="PDBsum" id="4BW9"/>
<dbReference type="PDBsum" id="4BWA"/>
<dbReference type="PDBsum" id="4CH3"/>
<dbReference type="PDBsum" id="4CH4"/>
<dbReference type="PDBsum" id="4CH5"/>
<dbReference type="PDBsum" id="4CH6"/>
<dbReference type="PDBsum" id="4CS2"/>
<dbReference type="PDBsum" id="4CS3"/>
<dbReference type="PDBsum" id="4CS4"/>
<dbReference type="PDBsum" id="4Q6G"/>
<dbReference type="PDBsum" id="4TQD"/>
<dbReference type="PDBsum" id="4TQF"/>
<dbReference type="PDBsum" id="4ZIB"/>
<dbReference type="PDBsum" id="5K1P"/>
<dbReference type="PDBsum" id="5K1X"/>
<dbReference type="PDBsum" id="5UD5"/>
<dbReference type="PDBsum" id="5V6X"/>
<dbReference type="PDBsum" id="6AAC"/>
<dbReference type="PDBsum" id="6AAD"/>
<dbReference type="PDBsum" id="6AAN"/>
<dbReference type="PDBsum" id="6AAO"/>
<dbReference type="PDBsum" id="6AAP"/>
<dbReference type="PDBsum" id="6AAQ"/>
<dbReference type="PDBsum" id="6AAZ"/>
<dbReference type="PDBsum" id="6AB0"/>
<dbReference type="PDBsum" id="6AB1"/>
<dbReference type="PDBsum" id="6AB2"/>
<dbReference type="PDBsum" id="6AB8"/>
<dbReference type="PDBsum" id="6ABK"/>
<dbReference type="PDBsum" id="6ABL"/>
<dbReference type="PDBsum" id="6ABM"/>
<dbReference type="PDBsum" id="6LY3"/>
<dbReference type="PDBsum" id="6LY6"/>
<dbReference type="PDBsum" id="6LY7"/>
<dbReference type="PDBsum" id="6LYA"/>
<dbReference type="PDBsum" id="6LYB"/>
<dbReference type="PDBsum" id="7RSM"/>
<dbReference type="PDBsum" id="8KE1"/>
<dbReference type="PDBsum" id="8KE2"/>
<dbReference type="PDBsum" id="8KE3"/>
<dbReference type="PDBsum" id="8KE4"/>
<dbReference type="PDBsum" id="8KE5"/>
<dbReference type="PDBsum" id="8KE6"/>
<dbReference type="PDBsum" id="8RIS"/>
<dbReference type="SMR" id="Q8PWY1"/>
<dbReference type="GeneID" id="82160487"/>
<dbReference type="KEGG" id="mma:MM_1445"/>
<dbReference type="PATRIC" id="fig|192952.21.peg.1671"/>
<dbReference type="eggNOG" id="arCOG00413">
    <property type="taxonomic scope" value="Archaea"/>
</dbReference>
<dbReference type="HOGENOM" id="CLU_648316_0_0_2"/>
<dbReference type="BRENDA" id="6.1.1.26">
    <property type="organism ID" value="3270"/>
</dbReference>
<dbReference type="EvolutionaryTrace" id="Q8PWY1"/>
<dbReference type="Proteomes" id="UP000000595">
    <property type="component" value="Chromosome"/>
</dbReference>
<dbReference type="GO" id="GO:0005737">
    <property type="term" value="C:cytoplasm"/>
    <property type="evidence" value="ECO:0007669"/>
    <property type="project" value="UniProtKB-SubCell"/>
</dbReference>
<dbReference type="GO" id="GO:0005524">
    <property type="term" value="F:ATP binding"/>
    <property type="evidence" value="ECO:0007669"/>
    <property type="project" value="UniProtKB-UniRule"/>
</dbReference>
<dbReference type="GO" id="GO:0043767">
    <property type="term" value="F:pyrrolysyl-tRNA synthetase activity"/>
    <property type="evidence" value="ECO:0007669"/>
    <property type="project" value="UniProtKB-EC"/>
</dbReference>
<dbReference type="GO" id="GO:0000049">
    <property type="term" value="F:tRNA binding"/>
    <property type="evidence" value="ECO:0007669"/>
    <property type="project" value="InterPro"/>
</dbReference>
<dbReference type="GO" id="GO:0006418">
    <property type="term" value="P:tRNA aminoacylation for protein translation"/>
    <property type="evidence" value="ECO:0007669"/>
    <property type="project" value="UniProtKB-UniRule"/>
</dbReference>
<dbReference type="Gene3D" id="3.30.930.10">
    <property type="entry name" value="Bira Bifunctional Protein, Domain 2"/>
    <property type="match status" value="1"/>
</dbReference>
<dbReference type="Gene3D" id="1.10.287.540">
    <property type="entry name" value="Helix hairpin bin"/>
    <property type="match status" value="1"/>
</dbReference>
<dbReference type="HAMAP" id="MF_01573">
    <property type="entry name" value="Pyl_tRNA_synth"/>
    <property type="match status" value="1"/>
</dbReference>
<dbReference type="InterPro" id="IPR006195">
    <property type="entry name" value="aa-tRNA-synth_II"/>
</dbReference>
<dbReference type="InterPro" id="IPR045864">
    <property type="entry name" value="aa-tRNA-synth_II/BPL/LPL"/>
</dbReference>
<dbReference type="InterPro" id="IPR002319">
    <property type="entry name" value="Phenylalanyl-tRNA_Synthase"/>
</dbReference>
<dbReference type="InterPro" id="IPR012739">
    <property type="entry name" value="Pyrrolysyl-tRNA_ligase"/>
</dbReference>
<dbReference type="InterPro" id="IPR023877">
    <property type="entry name" value="Pyrrolysyl-tRNA_ligase_C"/>
</dbReference>
<dbReference type="InterPro" id="IPR023878">
    <property type="entry name" value="Pyrrolysyl-tRNA_ligase_N"/>
</dbReference>
<dbReference type="NCBIfam" id="NF007083">
    <property type="entry name" value="PRK09537.1"/>
    <property type="match status" value="1"/>
</dbReference>
<dbReference type="NCBIfam" id="TIGR02367">
    <property type="entry name" value="PylS_Cterm"/>
    <property type="match status" value="1"/>
</dbReference>
<dbReference type="NCBIfam" id="TIGR03912">
    <property type="entry name" value="PylS_Nterm"/>
    <property type="match status" value="1"/>
</dbReference>
<dbReference type="Pfam" id="PF01409">
    <property type="entry name" value="tRNA-synt_2d"/>
    <property type="match status" value="1"/>
</dbReference>
<dbReference type="SUPFAM" id="SSF55681">
    <property type="entry name" value="Class II aaRS and biotin synthetases"/>
    <property type="match status" value="1"/>
</dbReference>
<dbReference type="PROSITE" id="PS50862">
    <property type="entry name" value="AA_TRNA_LIGASE_II"/>
    <property type="match status" value="1"/>
</dbReference>
<protein>
    <recommendedName>
        <fullName evidence="1">Pyrrolysine--tRNA ligase</fullName>
        <ecNumber evidence="1">6.1.1.26</ecNumber>
    </recommendedName>
    <alternativeName>
        <fullName>Pyrrolysine--tRNA(Pyl) ligase</fullName>
    </alternativeName>
    <alternativeName>
        <fullName evidence="1">Pyrrolysyl-tRNA synthetase</fullName>
        <shortName evidence="1">PylRS</shortName>
    </alternativeName>
</protein>